<dbReference type="EMBL" id="CP000880">
    <property type="protein sequence ID" value="ABX22649.1"/>
    <property type="molecule type" value="Genomic_DNA"/>
</dbReference>
<dbReference type="SMR" id="A9MPK6"/>
<dbReference type="STRING" id="41514.SARI_02801"/>
<dbReference type="KEGG" id="ses:SARI_02801"/>
<dbReference type="HOGENOM" id="CLU_015263_7_0_6"/>
<dbReference type="Proteomes" id="UP000002084">
    <property type="component" value="Chromosome"/>
</dbReference>
<dbReference type="GO" id="GO:0005886">
    <property type="term" value="C:plasma membrane"/>
    <property type="evidence" value="ECO:0007669"/>
    <property type="project" value="UniProtKB-SubCell"/>
</dbReference>
<dbReference type="GO" id="GO:0015297">
    <property type="term" value="F:antiporter activity"/>
    <property type="evidence" value="ECO:0007669"/>
    <property type="project" value="UniProtKB-UniRule"/>
</dbReference>
<dbReference type="GO" id="GO:0005247">
    <property type="term" value="F:voltage-gated chloride channel activity"/>
    <property type="evidence" value="ECO:0007669"/>
    <property type="project" value="TreeGrafter"/>
</dbReference>
<dbReference type="CDD" id="cd01031">
    <property type="entry name" value="EriC"/>
    <property type="match status" value="1"/>
</dbReference>
<dbReference type="FunFam" id="1.10.3080.10:FF:000005">
    <property type="entry name" value="H(+)/Cl(-) exchange transporter ClcA"/>
    <property type="match status" value="1"/>
</dbReference>
<dbReference type="Gene3D" id="1.10.3080.10">
    <property type="entry name" value="Clc chloride channel"/>
    <property type="match status" value="1"/>
</dbReference>
<dbReference type="HAMAP" id="MF_01128">
    <property type="entry name" value="CLC_ClcA"/>
    <property type="match status" value="1"/>
</dbReference>
<dbReference type="InterPro" id="IPR023861">
    <property type="entry name" value="Cl-channel_ClcA"/>
</dbReference>
<dbReference type="InterPro" id="IPR014743">
    <property type="entry name" value="Cl-channel_core"/>
</dbReference>
<dbReference type="InterPro" id="IPR001807">
    <property type="entry name" value="ClC"/>
</dbReference>
<dbReference type="NCBIfam" id="NF003640">
    <property type="entry name" value="PRK05277.1"/>
    <property type="match status" value="1"/>
</dbReference>
<dbReference type="PANTHER" id="PTHR45711">
    <property type="entry name" value="CHLORIDE CHANNEL PROTEIN"/>
    <property type="match status" value="1"/>
</dbReference>
<dbReference type="PANTHER" id="PTHR45711:SF6">
    <property type="entry name" value="CHLORIDE CHANNEL PROTEIN"/>
    <property type="match status" value="1"/>
</dbReference>
<dbReference type="Pfam" id="PF00654">
    <property type="entry name" value="Voltage_CLC"/>
    <property type="match status" value="1"/>
</dbReference>
<dbReference type="PRINTS" id="PR00762">
    <property type="entry name" value="CLCHANNEL"/>
</dbReference>
<dbReference type="SUPFAM" id="SSF81340">
    <property type="entry name" value="Clc chloride channel"/>
    <property type="match status" value="1"/>
</dbReference>
<sequence>MKTDTPTFEAQQIVRLRRGRLIRRLVQRDKTPLAILLMAAVVGTLTGLVGVAFEKAVSWVQNMRIGALVQVADHAFLLWPLAFILSALLAMVGYFLVRKFAPEAGGSGIPEIEGALEELRPVRWWRVLPVKFIGGMGTLGAGMVLGREGPTVQIGGNLGRMVLDVFRMRSAEARHTLLATGAAAGLSAAFNAPLAGILFIIEEMRPQFRYNLISIKAVFTGVIMSSIVFRIFNGEAPIIEVGKLSNAPVNTLWLYLVLGIIFGCVGPVFNTLVLRTQDMFQRFHGGEIKKWVLMGGAIGGLCGILGLIEPEAAGGGFNLIPIAAAGNFSVGLLLFIFITRVVTTLLCFSSGAPGGIFAPMLALGTLLGTAFGMAAAVLFPQYHLEAGTFAIAGMGALMAASVRAPLTGIVLVLEMTDNYQLILPMIITCLGATLLAQFLGGKPLYSTILARTLAKQDAEQAAKNQSTPAGENT</sequence>
<accession>A9MPK6</accession>
<proteinExistence type="inferred from homology"/>
<name>CLCA_SALAR</name>
<protein>
    <recommendedName>
        <fullName evidence="1">H(+)/Cl(-) exchange transporter ClcA</fullName>
    </recommendedName>
</protein>
<reference key="1">
    <citation type="submission" date="2007-11" db="EMBL/GenBank/DDBJ databases">
        <authorList>
            <consortium name="The Salmonella enterica serovar Arizonae Genome Sequencing Project"/>
            <person name="McClelland M."/>
            <person name="Sanderson E.K."/>
            <person name="Porwollik S."/>
            <person name="Spieth J."/>
            <person name="Clifton W.S."/>
            <person name="Fulton R."/>
            <person name="Chunyan W."/>
            <person name="Wollam A."/>
            <person name="Shah N."/>
            <person name="Pepin K."/>
            <person name="Bhonagiri V."/>
            <person name="Nash W."/>
            <person name="Johnson M."/>
            <person name="Thiruvilangam P."/>
            <person name="Wilson R."/>
        </authorList>
    </citation>
    <scope>NUCLEOTIDE SEQUENCE [LARGE SCALE GENOMIC DNA]</scope>
    <source>
        <strain>ATCC BAA-731 / CDC346-86 / RSK2980</strain>
    </source>
</reference>
<organism>
    <name type="scientific">Salmonella arizonae (strain ATCC BAA-731 / CDC346-86 / RSK2980)</name>
    <dbReference type="NCBI Taxonomy" id="41514"/>
    <lineage>
        <taxon>Bacteria</taxon>
        <taxon>Pseudomonadati</taxon>
        <taxon>Pseudomonadota</taxon>
        <taxon>Gammaproteobacteria</taxon>
        <taxon>Enterobacterales</taxon>
        <taxon>Enterobacteriaceae</taxon>
        <taxon>Salmonella</taxon>
    </lineage>
</organism>
<comment type="function">
    <text evidence="1">Proton-coupled chloride transporter. Functions as antiport system and exchanges two chloride ions for 1 proton. Probably acts as an electrical shunt for an outwardly-directed proton pump that is linked to amino acid decarboxylation, as part of the extreme acid resistance (XAR) response.</text>
</comment>
<comment type="catalytic activity">
    <reaction evidence="1">
        <text>2 chloride(in) + H(+)(out) = 2 chloride(out) + H(+)(in)</text>
        <dbReference type="Rhea" id="RHEA:29567"/>
        <dbReference type="ChEBI" id="CHEBI:15378"/>
        <dbReference type="ChEBI" id="CHEBI:17996"/>
    </reaction>
</comment>
<comment type="subunit">
    <text evidence="1">Homodimer.</text>
</comment>
<comment type="subcellular location">
    <subcellularLocation>
        <location evidence="1">Cell inner membrane</location>
        <topology evidence="1">Multi-pass membrane protein</topology>
    </subcellularLocation>
</comment>
<comment type="similarity">
    <text evidence="1">Belongs to the chloride channel (TC 2.A.49) family. ClcA subfamily.</text>
</comment>
<keyword id="KW-0050">Antiport</keyword>
<keyword id="KW-0997">Cell inner membrane</keyword>
<keyword id="KW-1003">Cell membrane</keyword>
<keyword id="KW-0868">Chloride</keyword>
<keyword id="KW-0406">Ion transport</keyword>
<keyword id="KW-0472">Membrane</keyword>
<keyword id="KW-1185">Reference proteome</keyword>
<keyword id="KW-0812">Transmembrane</keyword>
<keyword id="KW-1133">Transmembrane helix</keyword>
<keyword id="KW-0813">Transport</keyword>
<gene>
    <name evidence="1" type="primary">clcA</name>
    <name evidence="1" type="synonym">eriC</name>
    <name type="ordered locus">SARI_02801</name>
</gene>
<feature type="chain" id="PRO_1000085019" description="H(+)/Cl(-) exchange transporter ClcA">
    <location>
        <begin position="1"/>
        <end position="473"/>
    </location>
</feature>
<feature type="topological domain" description="Cytoplasmic" evidence="1">
    <location>
        <begin position="1"/>
        <end position="32"/>
    </location>
</feature>
<feature type="transmembrane region" description="Helical" evidence="1">
    <location>
        <begin position="33"/>
        <end position="69"/>
    </location>
</feature>
<feature type="topological domain" description="Periplasmic" evidence="1">
    <location>
        <begin position="70"/>
        <end position="76"/>
    </location>
</feature>
<feature type="transmembrane region" description="Helical" evidence="1">
    <location>
        <begin position="77"/>
        <end position="100"/>
    </location>
</feature>
<feature type="intramembrane region" description="Helical" evidence="1">
    <location>
        <begin position="109"/>
        <end position="116"/>
    </location>
</feature>
<feature type="topological domain" description="Cytoplasmic" evidence="1">
    <location>
        <begin position="117"/>
        <end position="123"/>
    </location>
</feature>
<feature type="transmembrane region" description="Helical" evidence="1">
    <location>
        <begin position="124"/>
        <end position="141"/>
    </location>
</feature>
<feature type="transmembrane region" description="Helical" evidence="1">
    <location>
        <begin position="148"/>
        <end position="166"/>
    </location>
</feature>
<feature type="topological domain" description="Cytoplasmic" evidence="1">
    <location>
        <begin position="167"/>
        <end position="176"/>
    </location>
</feature>
<feature type="intramembrane region" description="Helical" evidence="1">
    <location>
        <begin position="177"/>
        <end position="189"/>
    </location>
</feature>
<feature type="intramembrane region" description="Helical" evidence="1">
    <location>
        <begin position="193"/>
        <end position="201"/>
    </location>
</feature>
<feature type="topological domain" description="Cytoplasmic" evidence="1">
    <location>
        <begin position="202"/>
        <end position="214"/>
    </location>
</feature>
<feature type="transmembrane region" description="Helical" evidence="1">
    <location>
        <begin position="215"/>
        <end position="232"/>
    </location>
</feature>
<feature type="topological domain" description="Periplasmic" evidence="1">
    <location>
        <begin position="233"/>
        <end position="252"/>
    </location>
</feature>
<feature type="transmembrane region" description="Helical" evidence="1">
    <location>
        <begin position="253"/>
        <end position="281"/>
    </location>
</feature>
<feature type="topological domain" description="Cytoplasmic" evidence="1">
    <location>
        <begin position="282"/>
        <end position="287"/>
    </location>
</feature>
<feature type="transmembrane region" description="Helical" evidence="1">
    <location>
        <begin position="288"/>
        <end position="309"/>
    </location>
</feature>
<feature type="topological domain" description="Periplasmic" evidence="1">
    <location>
        <begin position="310"/>
        <end position="329"/>
    </location>
</feature>
<feature type="transmembrane region" description="Helical" evidence="1">
    <location>
        <begin position="330"/>
        <end position="349"/>
    </location>
</feature>
<feature type="transmembrane region" description="Helical" evidence="1">
    <location>
        <begin position="355"/>
        <end position="376"/>
    </location>
</feature>
<feature type="topological domain" description="Periplasmic" evidence="1">
    <location>
        <begin position="377"/>
        <end position="386"/>
    </location>
</feature>
<feature type="intramembrane region" description="Helical" evidence="1">
    <location>
        <begin position="387"/>
        <end position="401"/>
    </location>
</feature>
<feature type="intramembrane region" description="Note=Loop between two helices" evidence="1">
    <location>
        <begin position="402"/>
        <end position="404"/>
    </location>
</feature>
<feature type="intramembrane region" description="Helical" evidence="1">
    <location>
        <begin position="405"/>
        <end position="416"/>
    </location>
</feature>
<feature type="intramembrane region" description="Note=Loop between two helices" evidence="1">
    <location>
        <begin position="417"/>
        <end position="421"/>
    </location>
</feature>
<feature type="transmembrane region" description="Helical" evidence="1">
    <location>
        <begin position="422"/>
        <end position="438"/>
    </location>
</feature>
<feature type="topological domain" description="Cytoplasmic" evidence="1">
    <location>
        <begin position="439"/>
        <end position="473"/>
    </location>
</feature>
<feature type="short sequence motif" description="Selectivity filter part_1" evidence="1">
    <location>
        <begin position="106"/>
        <end position="110"/>
    </location>
</feature>
<feature type="short sequence motif" description="Selectivity filter part_2" evidence="1">
    <location>
        <begin position="146"/>
        <end position="150"/>
    </location>
</feature>
<feature type="short sequence motif" description="Selectivity filter part_3" evidence="1">
    <location>
        <begin position="355"/>
        <end position="359"/>
    </location>
</feature>
<feature type="binding site" evidence="1">
    <location>
        <position position="107"/>
    </location>
    <ligand>
        <name>chloride</name>
        <dbReference type="ChEBI" id="CHEBI:17996"/>
    </ligand>
</feature>
<feature type="binding site" evidence="1">
    <location>
        <position position="356"/>
    </location>
    <ligand>
        <name>chloride</name>
        <dbReference type="ChEBI" id="CHEBI:17996"/>
    </ligand>
</feature>
<feature type="binding site" evidence="1">
    <location>
        <position position="357"/>
    </location>
    <ligand>
        <name>chloride</name>
        <dbReference type="ChEBI" id="CHEBI:17996"/>
    </ligand>
</feature>
<feature type="binding site" evidence="1">
    <location>
        <position position="445"/>
    </location>
    <ligand>
        <name>chloride</name>
        <dbReference type="ChEBI" id="CHEBI:17996"/>
    </ligand>
</feature>
<feature type="site" description="Mediates proton transfer from the outer aqueous phase to the interior of the protein; involved in linking H(+) and Cl(-) transport" evidence="1">
    <location>
        <position position="148"/>
    </location>
</feature>
<feature type="site" description="Mediates proton transfer from the protein to the inner aqueous phase" evidence="1">
    <location>
        <position position="203"/>
    </location>
</feature>
<evidence type="ECO:0000255" key="1">
    <source>
        <dbReference type="HAMAP-Rule" id="MF_01128"/>
    </source>
</evidence>